<reference key="1">
    <citation type="submission" date="2005-08" db="EMBL/GenBank/DDBJ databases">
        <title>Complete sequence of Synechococcus sp. CC9902.</title>
        <authorList>
            <person name="Copeland A."/>
            <person name="Lucas S."/>
            <person name="Lapidus A."/>
            <person name="Barry K."/>
            <person name="Detter J.C."/>
            <person name="Glavina T."/>
            <person name="Hammon N."/>
            <person name="Israni S."/>
            <person name="Pitluck S."/>
            <person name="Martinez M."/>
            <person name="Schmutz J."/>
            <person name="Larimer F."/>
            <person name="Land M."/>
            <person name="Kyrpides N."/>
            <person name="Ivanova N."/>
            <person name="Richardson P."/>
        </authorList>
    </citation>
    <scope>NUCLEOTIDE SEQUENCE [LARGE SCALE GENOMIC DNA]</scope>
    <source>
        <strain>CC9902</strain>
    </source>
</reference>
<feature type="chain" id="PRO_0000233588" description="Small ribosomal subunit protein uS17">
    <location>
        <begin position="1"/>
        <end position="95"/>
    </location>
</feature>
<protein>
    <recommendedName>
        <fullName evidence="1">Small ribosomal subunit protein uS17</fullName>
    </recommendedName>
    <alternativeName>
        <fullName evidence="2">30S ribosomal protein S17</fullName>
    </alternativeName>
</protein>
<proteinExistence type="inferred from homology"/>
<name>RS17_SYNS9</name>
<comment type="function">
    <text evidence="1">One of the primary rRNA binding proteins, it binds specifically to the 5'-end of 16S ribosomal RNA.</text>
</comment>
<comment type="subunit">
    <text evidence="1">Part of the 30S ribosomal subunit.</text>
</comment>
<comment type="similarity">
    <text evidence="1">Belongs to the universal ribosomal protein uS17 family.</text>
</comment>
<organism>
    <name type="scientific">Synechococcus sp. (strain CC9902)</name>
    <dbReference type="NCBI Taxonomy" id="316279"/>
    <lineage>
        <taxon>Bacteria</taxon>
        <taxon>Bacillati</taxon>
        <taxon>Cyanobacteriota</taxon>
        <taxon>Cyanophyceae</taxon>
        <taxon>Synechococcales</taxon>
        <taxon>Synechococcaceae</taxon>
        <taxon>Synechococcus</taxon>
    </lineage>
</organism>
<gene>
    <name evidence="1" type="primary">rpsQ</name>
    <name evidence="1" type="synonym">rps17</name>
    <name type="ordered locus">Syncc9902_1964</name>
</gene>
<dbReference type="EMBL" id="CP000097">
    <property type="protein sequence ID" value="ABB26922.1"/>
    <property type="molecule type" value="Genomic_DNA"/>
</dbReference>
<dbReference type="RefSeq" id="WP_006169854.1">
    <property type="nucleotide sequence ID" value="NC_007513.1"/>
</dbReference>
<dbReference type="SMR" id="Q3AW84"/>
<dbReference type="STRING" id="316279.Syncc9902_1964"/>
<dbReference type="KEGG" id="sye:Syncc9902_1964"/>
<dbReference type="eggNOG" id="COG0186">
    <property type="taxonomic scope" value="Bacteria"/>
</dbReference>
<dbReference type="HOGENOM" id="CLU_073626_1_2_3"/>
<dbReference type="OrthoDB" id="9811714at2"/>
<dbReference type="Proteomes" id="UP000002712">
    <property type="component" value="Chromosome"/>
</dbReference>
<dbReference type="GO" id="GO:0022627">
    <property type="term" value="C:cytosolic small ribosomal subunit"/>
    <property type="evidence" value="ECO:0007669"/>
    <property type="project" value="TreeGrafter"/>
</dbReference>
<dbReference type="GO" id="GO:0019843">
    <property type="term" value="F:rRNA binding"/>
    <property type="evidence" value="ECO:0007669"/>
    <property type="project" value="UniProtKB-UniRule"/>
</dbReference>
<dbReference type="GO" id="GO:0003735">
    <property type="term" value="F:structural constituent of ribosome"/>
    <property type="evidence" value="ECO:0007669"/>
    <property type="project" value="InterPro"/>
</dbReference>
<dbReference type="GO" id="GO:0006412">
    <property type="term" value="P:translation"/>
    <property type="evidence" value="ECO:0007669"/>
    <property type="project" value="UniProtKB-UniRule"/>
</dbReference>
<dbReference type="CDD" id="cd00364">
    <property type="entry name" value="Ribosomal_uS17"/>
    <property type="match status" value="1"/>
</dbReference>
<dbReference type="Gene3D" id="2.40.50.140">
    <property type="entry name" value="Nucleic acid-binding proteins"/>
    <property type="match status" value="1"/>
</dbReference>
<dbReference type="HAMAP" id="MF_01345_B">
    <property type="entry name" value="Ribosomal_uS17_B"/>
    <property type="match status" value="1"/>
</dbReference>
<dbReference type="InterPro" id="IPR012340">
    <property type="entry name" value="NA-bd_OB-fold"/>
</dbReference>
<dbReference type="InterPro" id="IPR000266">
    <property type="entry name" value="Ribosomal_uS17"/>
</dbReference>
<dbReference type="InterPro" id="IPR019984">
    <property type="entry name" value="Ribosomal_uS17_bact/chlr"/>
</dbReference>
<dbReference type="NCBIfam" id="NF004123">
    <property type="entry name" value="PRK05610.1"/>
    <property type="match status" value="1"/>
</dbReference>
<dbReference type="NCBIfam" id="TIGR03635">
    <property type="entry name" value="uS17_bact"/>
    <property type="match status" value="1"/>
</dbReference>
<dbReference type="PANTHER" id="PTHR10744">
    <property type="entry name" value="40S RIBOSOMAL PROTEIN S11 FAMILY MEMBER"/>
    <property type="match status" value="1"/>
</dbReference>
<dbReference type="PANTHER" id="PTHR10744:SF1">
    <property type="entry name" value="SMALL RIBOSOMAL SUBUNIT PROTEIN US17M"/>
    <property type="match status" value="1"/>
</dbReference>
<dbReference type="Pfam" id="PF00366">
    <property type="entry name" value="Ribosomal_S17"/>
    <property type="match status" value="1"/>
</dbReference>
<dbReference type="PRINTS" id="PR00973">
    <property type="entry name" value="RIBOSOMALS17"/>
</dbReference>
<dbReference type="SUPFAM" id="SSF50249">
    <property type="entry name" value="Nucleic acid-binding proteins"/>
    <property type="match status" value="1"/>
</dbReference>
<evidence type="ECO:0000255" key="1">
    <source>
        <dbReference type="HAMAP-Rule" id="MF_01345"/>
    </source>
</evidence>
<evidence type="ECO:0000305" key="2"/>
<sequence length="95" mass="10737">MAVKERVGTVVSDKMEKTVVVAVETRFPHPIYQKTVSRTTRYKAHDEDNSCRVGDRVRITETRPMSRQKRWAIAEVLSHSPKAAAAEAKAEEANQ</sequence>
<keyword id="KW-1185">Reference proteome</keyword>
<keyword id="KW-0687">Ribonucleoprotein</keyword>
<keyword id="KW-0689">Ribosomal protein</keyword>
<keyword id="KW-0694">RNA-binding</keyword>
<keyword id="KW-0699">rRNA-binding</keyword>
<accession>Q3AW84</accession>